<protein>
    <recommendedName>
        <fullName evidence="1">Translation initiation factor 5A</fullName>
    </recommendedName>
    <alternativeName>
        <fullName evidence="1">Hypusine-containing protein</fullName>
    </alternativeName>
    <alternativeName>
        <fullName evidence="1">eIF-5A</fullName>
    </alternativeName>
</protein>
<proteinExistence type="inferred from homology"/>
<dbReference type="EMBL" id="CP000254">
    <property type="protein sequence ID" value="ABD40654.1"/>
    <property type="molecule type" value="Genomic_DNA"/>
</dbReference>
<dbReference type="RefSeq" id="WP_011447933.1">
    <property type="nucleotide sequence ID" value="NC_007796.1"/>
</dbReference>
<dbReference type="SMR" id="Q2FQ93"/>
<dbReference type="FunCoup" id="Q2FQ93">
    <property type="interactions" value="102"/>
</dbReference>
<dbReference type="STRING" id="323259.Mhun_0904"/>
<dbReference type="EnsemblBacteria" id="ABD40654">
    <property type="protein sequence ID" value="ABD40654"/>
    <property type="gene ID" value="Mhun_0904"/>
</dbReference>
<dbReference type="GeneID" id="3923912"/>
<dbReference type="KEGG" id="mhu:Mhun_0904"/>
<dbReference type="eggNOG" id="arCOG04277">
    <property type="taxonomic scope" value="Archaea"/>
</dbReference>
<dbReference type="HOGENOM" id="CLU_102600_3_0_2"/>
<dbReference type="InParanoid" id="Q2FQ93"/>
<dbReference type="OrthoDB" id="23689at2157"/>
<dbReference type="Proteomes" id="UP000001941">
    <property type="component" value="Chromosome"/>
</dbReference>
<dbReference type="GO" id="GO:0005737">
    <property type="term" value="C:cytoplasm"/>
    <property type="evidence" value="ECO:0007669"/>
    <property type="project" value="UniProtKB-SubCell"/>
</dbReference>
<dbReference type="GO" id="GO:0043022">
    <property type="term" value="F:ribosome binding"/>
    <property type="evidence" value="ECO:0007669"/>
    <property type="project" value="InterPro"/>
</dbReference>
<dbReference type="GO" id="GO:0003723">
    <property type="term" value="F:RNA binding"/>
    <property type="evidence" value="ECO:0007669"/>
    <property type="project" value="InterPro"/>
</dbReference>
<dbReference type="GO" id="GO:0003746">
    <property type="term" value="F:translation elongation factor activity"/>
    <property type="evidence" value="ECO:0007669"/>
    <property type="project" value="InterPro"/>
</dbReference>
<dbReference type="GO" id="GO:0003743">
    <property type="term" value="F:translation initiation factor activity"/>
    <property type="evidence" value="ECO:0007669"/>
    <property type="project" value="UniProtKB-UniRule"/>
</dbReference>
<dbReference type="GO" id="GO:0045901">
    <property type="term" value="P:positive regulation of translational elongation"/>
    <property type="evidence" value="ECO:0007669"/>
    <property type="project" value="InterPro"/>
</dbReference>
<dbReference type="GO" id="GO:0045905">
    <property type="term" value="P:positive regulation of translational termination"/>
    <property type="evidence" value="ECO:0007669"/>
    <property type="project" value="InterPro"/>
</dbReference>
<dbReference type="CDD" id="cd04467">
    <property type="entry name" value="S1_aIF5A"/>
    <property type="match status" value="1"/>
</dbReference>
<dbReference type="FunFam" id="2.30.30.30:FF:000038">
    <property type="entry name" value="Translation initiation factor 5A"/>
    <property type="match status" value="1"/>
</dbReference>
<dbReference type="Gene3D" id="2.30.30.30">
    <property type="match status" value="1"/>
</dbReference>
<dbReference type="Gene3D" id="2.40.50.140">
    <property type="entry name" value="Nucleic acid-binding proteins"/>
    <property type="match status" value="1"/>
</dbReference>
<dbReference type="HAMAP" id="MF_00085">
    <property type="entry name" value="eIF_5A"/>
    <property type="match status" value="1"/>
</dbReference>
<dbReference type="InterPro" id="IPR001884">
    <property type="entry name" value="IF5A-like"/>
</dbReference>
<dbReference type="InterPro" id="IPR048670">
    <property type="entry name" value="IF5A-like_N"/>
</dbReference>
<dbReference type="InterPro" id="IPR012340">
    <property type="entry name" value="NA-bd_OB-fold"/>
</dbReference>
<dbReference type="InterPro" id="IPR014722">
    <property type="entry name" value="Rib_uL2_dom2"/>
</dbReference>
<dbReference type="InterPro" id="IPR019769">
    <property type="entry name" value="Trans_elong_IF5A_hypusine_site"/>
</dbReference>
<dbReference type="InterPro" id="IPR022847">
    <property type="entry name" value="Transl_elong_IF5A_arc"/>
</dbReference>
<dbReference type="InterPro" id="IPR020189">
    <property type="entry name" value="Transl_elong_IF5A_C"/>
</dbReference>
<dbReference type="InterPro" id="IPR008991">
    <property type="entry name" value="Translation_prot_SH3-like_sf"/>
</dbReference>
<dbReference type="NCBIfam" id="TIGR00037">
    <property type="entry name" value="eIF_5A"/>
    <property type="match status" value="1"/>
</dbReference>
<dbReference type="NCBIfam" id="NF003076">
    <property type="entry name" value="PRK03999.1"/>
    <property type="match status" value="1"/>
</dbReference>
<dbReference type="PANTHER" id="PTHR11673">
    <property type="entry name" value="TRANSLATION INITIATION FACTOR 5A FAMILY MEMBER"/>
    <property type="match status" value="1"/>
</dbReference>
<dbReference type="Pfam" id="PF21485">
    <property type="entry name" value="IF5A-like_N"/>
    <property type="match status" value="1"/>
</dbReference>
<dbReference type="PIRSF" id="PIRSF003025">
    <property type="entry name" value="eIF5A"/>
    <property type="match status" value="1"/>
</dbReference>
<dbReference type="SMART" id="SM01376">
    <property type="entry name" value="eIF-5a"/>
    <property type="match status" value="1"/>
</dbReference>
<dbReference type="SUPFAM" id="SSF50249">
    <property type="entry name" value="Nucleic acid-binding proteins"/>
    <property type="match status" value="1"/>
</dbReference>
<dbReference type="SUPFAM" id="SSF50104">
    <property type="entry name" value="Translation proteins SH3-like domain"/>
    <property type="match status" value="1"/>
</dbReference>
<dbReference type="PROSITE" id="PS00302">
    <property type="entry name" value="IF5A_HYPUSINE"/>
    <property type="match status" value="1"/>
</dbReference>
<comment type="function">
    <text evidence="1">Functions by promoting the formation of the first peptide bond.</text>
</comment>
<comment type="subcellular location">
    <subcellularLocation>
        <location evidence="1">Cytoplasm</location>
    </subcellularLocation>
</comment>
<comment type="similarity">
    <text evidence="1">Belongs to the eIF-5A family.</text>
</comment>
<name>IF5A_METHJ</name>
<sequence>MKEQTEVGKLKEGKYLLVDDEPCKILSISVSKPGKHGAAKARLDVVGIFDGVKRSIVQPVSAKVYAPIVERRNAQVISIAGNVVQMMDLESFENFEVTVTDDVKDRIEAGKETMYIYSMEKRKIDFL</sequence>
<organism>
    <name type="scientific">Methanospirillum hungatei JF-1 (strain ATCC 27890 / DSM 864 / NBRC 100397 / JF-1)</name>
    <dbReference type="NCBI Taxonomy" id="323259"/>
    <lineage>
        <taxon>Archaea</taxon>
        <taxon>Methanobacteriati</taxon>
        <taxon>Methanobacteriota</taxon>
        <taxon>Stenosarchaea group</taxon>
        <taxon>Methanomicrobia</taxon>
        <taxon>Methanomicrobiales</taxon>
        <taxon>Methanospirillaceae</taxon>
        <taxon>Methanospirillum</taxon>
    </lineage>
</organism>
<accession>Q2FQ93</accession>
<feature type="chain" id="PRO_0000259439" description="Translation initiation factor 5A">
    <location>
        <begin position="1"/>
        <end position="127"/>
    </location>
</feature>
<feature type="modified residue" description="Hypusine" evidence="1">
    <location>
        <position position="35"/>
    </location>
</feature>
<keyword id="KW-0963">Cytoplasm</keyword>
<keyword id="KW-0385">Hypusine</keyword>
<keyword id="KW-0396">Initiation factor</keyword>
<keyword id="KW-0648">Protein biosynthesis</keyword>
<keyword id="KW-1185">Reference proteome</keyword>
<reference key="1">
    <citation type="journal article" date="2016" name="Stand. Genomic Sci.">
        <title>Complete genome sequence of Methanospirillum hungatei type strain JF1.</title>
        <authorList>
            <person name="Gunsalus R.P."/>
            <person name="Cook L.E."/>
            <person name="Crable B."/>
            <person name="Rohlin L."/>
            <person name="McDonald E."/>
            <person name="Mouttaki H."/>
            <person name="Sieber J.R."/>
            <person name="Poweleit N."/>
            <person name="Zhou H."/>
            <person name="Lapidus A.L."/>
            <person name="Daligault H.E."/>
            <person name="Land M."/>
            <person name="Gilna P."/>
            <person name="Ivanova N."/>
            <person name="Kyrpides N."/>
            <person name="Culley D.E."/>
            <person name="McInerney M.J."/>
        </authorList>
    </citation>
    <scope>NUCLEOTIDE SEQUENCE [LARGE SCALE GENOMIC DNA]</scope>
    <source>
        <strain>ATCC 27890 / DSM 864 / NBRC 100397 / JF-1</strain>
    </source>
</reference>
<evidence type="ECO:0000255" key="1">
    <source>
        <dbReference type="HAMAP-Rule" id="MF_00085"/>
    </source>
</evidence>
<gene>
    <name evidence="1" type="primary">eif5a</name>
    <name type="ordered locus">Mhun_0904</name>
</gene>